<proteinExistence type="inferred from homology"/>
<reference key="1">
    <citation type="submission" date="2009-01" db="EMBL/GenBank/DDBJ databases">
        <title>Complete sequence of Anaeromyxobacter dehalogenans 2CP-1.</title>
        <authorList>
            <person name="Lucas S."/>
            <person name="Copeland A."/>
            <person name="Lapidus A."/>
            <person name="Glavina del Rio T."/>
            <person name="Dalin E."/>
            <person name="Tice H."/>
            <person name="Bruce D."/>
            <person name="Goodwin L."/>
            <person name="Pitluck S."/>
            <person name="Saunders E."/>
            <person name="Brettin T."/>
            <person name="Detter J.C."/>
            <person name="Han C."/>
            <person name="Larimer F."/>
            <person name="Land M."/>
            <person name="Hauser L."/>
            <person name="Kyrpides N."/>
            <person name="Ovchinnikova G."/>
            <person name="Beliaev A.S."/>
            <person name="Richardson P."/>
        </authorList>
    </citation>
    <scope>NUCLEOTIDE SEQUENCE [LARGE SCALE GENOMIC DNA]</scope>
    <source>
        <strain>2CP-1 / ATCC BAA-258</strain>
    </source>
</reference>
<protein>
    <recommendedName>
        <fullName evidence="1">Nucleotide-binding protein A2cp1_0112</fullName>
    </recommendedName>
</protein>
<gene>
    <name type="ordered locus">A2cp1_0112</name>
</gene>
<evidence type="ECO:0000255" key="1">
    <source>
        <dbReference type="HAMAP-Rule" id="MF_00632"/>
    </source>
</evidence>
<accession>B8J7X9</accession>
<organism>
    <name type="scientific">Anaeromyxobacter dehalogenans (strain 2CP-1 / ATCC BAA-258)</name>
    <dbReference type="NCBI Taxonomy" id="455488"/>
    <lineage>
        <taxon>Bacteria</taxon>
        <taxon>Pseudomonadati</taxon>
        <taxon>Myxococcota</taxon>
        <taxon>Myxococcia</taxon>
        <taxon>Myxococcales</taxon>
        <taxon>Cystobacterineae</taxon>
        <taxon>Anaeromyxobacteraceae</taxon>
        <taxon>Anaeromyxobacter</taxon>
    </lineage>
</organism>
<keyword id="KW-0547">Nucleotide-binding</keyword>
<comment type="function">
    <text evidence="1">Nucleotide-binding protein.</text>
</comment>
<comment type="similarity">
    <text evidence="1">Belongs to the YajQ family.</text>
</comment>
<name>Y112_ANAD2</name>
<feature type="chain" id="PRO_1000147278" description="Nucleotide-binding protein A2cp1_0112">
    <location>
        <begin position="1"/>
        <end position="162"/>
    </location>
</feature>
<dbReference type="EMBL" id="CP001359">
    <property type="protein sequence ID" value="ACL63471.1"/>
    <property type="molecule type" value="Genomic_DNA"/>
</dbReference>
<dbReference type="RefSeq" id="WP_012631559.1">
    <property type="nucleotide sequence ID" value="NC_011891.1"/>
</dbReference>
<dbReference type="SMR" id="B8J7X9"/>
<dbReference type="KEGG" id="acp:A2cp1_0112"/>
<dbReference type="HOGENOM" id="CLU_099839_1_0_7"/>
<dbReference type="Proteomes" id="UP000007089">
    <property type="component" value="Chromosome"/>
</dbReference>
<dbReference type="GO" id="GO:0005829">
    <property type="term" value="C:cytosol"/>
    <property type="evidence" value="ECO:0007669"/>
    <property type="project" value="TreeGrafter"/>
</dbReference>
<dbReference type="GO" id="GO:0000166">
    <property type="term" value="F:nucleotide binding"/>
    <property type="evidence" value="ECO:0007669"/>
    <property type="project" value="TreeGrafter"/>
</dbReference>
<dbReference type="CDD" id="cd11740">
    <property type="entry name" value="YajQ_like"/>
    <property type="match status" value="1"/>
</dbReference>
<dbReference type="Gene3D" id="3.30.70.860">
    <property type="match status" value="1"/>
</dbReference>
<dbReference type="Gene3D" id="3.30.70.990">
    <property type="entry name" value="YajQ-like, domain 2"/>
    <property type="match status" value="1"/>
</dbReference>
<dbReference type="HAMAP" id="MF_00632">
    <property type="entry name" value="YajQ"/>
    <property type="match status" value="1"/>
</dbReference>
<dbReference type="InterPro" id="IPR007551">
    <property type="entry name" value="DUF520"/>
</dbReference>
<dbReference type="InterPro" id="IPR035571">
    <property type="entry name" value="UPF0234-like_C"/>
</dbReference>
<dbReference type="InterPro" id="IPR035570">
    <property type="entry name" value="UPF0234_N"/>
</dbReference>
<dbReference type="InterPro" id="IPR036183">
    <property type="entry name" value="YajQ-like_sf"/>
</dbReference>
<dbReference type="NCBIfam" id="NF003819">
    <property type="entry name" value="PRK05412.1"/>
    <property type="match status" value="1"/>
</dbReference>
<dbReference type="PANTHER" id="PTHR30476">
    <property type="entry name" value="UPF0234 PROTEIN YAJQ"/>
    <property type="match status" value="1"/>
</dbReference>
<dbReference type="PANTHER" id="PTHR30476:SF0">
    <property type="entry name" value="UPF0234 PROTEIN YAJQ"/>
    <property type="match status" value="1"/>
</dbReference>
<dbReference type="Pfam" id="PF04461">
    <property type="entry name" value="DUF520"/>
    <property type="match status" value="1"/>
</dbReference>
<dbReference type="SUPFAM" id="SSF89963">
    <property type="entry name" value="YajQ-like"/>
    <property type="match status" value="2"/>
</dbReference>
<sequence length="162" mass="18010">MPSFDVVSEVDLMEVENAFNQARKEIAQRFDFKGTHTELERDKEQNVLIRAGSEGRAEAALQVLMEKLAKRGVALESLDPQKLEPASGGHVRQLVKLKRGLKIEDARKIVAKVKESGIKVQAAIQGEAVRVTGKKRDDLQAAIHAIRAAAFPIPLQFQNFRD</sequence>